<accession>P45724</accession>
<accession>Q53ZM9</accession>
<accession>Q8RWP4</accession>
<accession>Q94KC9</accession>
<accession>Q9SCN5</accession>
<feature type="chain" id="PRO_0000215383" description="Phenylalanine ammonia-lyase 2">
    <location>
        <begin position="1"/>
        <end position="717"/>
    </location>
</feature>
<feature type="active site" description="Proton donor/acceptor" evidence="3">
    <location>
        <position position="109"/>
    </location>
</feature>
<feature type="binding site" evidence="3">
    <location>
        <position position="261"/>
    </location>
    <ligand>
        <name>(E)-cinnamate</name>
        <dbReference type="ChEBI" id="CHEBI:15669"/>
    </ligand>
</feature>
<feature type="binding site" evidence="3">
    <location>
        <position position="349"/>
    </location>
    <ligand>
        <name>(E)-cinnamate</name>
        <dbReference type="ChEBI" id="CHEBI:15669"/>
    </ligand>
</feature>
<feature type="binding site" evidence="3">
    <location>
        <position position="355"/>
    </location>
    <ligand>
        <name>(E)-cinnamate</name>
        <dbReference type="ChEBI" id="CHEBI:15669"/>
    </ligand>
</feature>
<feature type="binding site" evidence="3">
    <location>
        <position position="385"/>
    </location>
    <ligand>
        <name>(E)-cinnamate</name>
        <dbReference type="ChEBI" id="CHEBI:15669"/>
    </ligand>
</feature>
<feature type="binding site" evidence="1">
    <location>
        <position position="457"/>
    </location>
    <ligand>
        <name>(E)-cinnamate</name>
        <dbReference type="ChEBI" id="CHEBI:15669"/>
    </ligand>
</feature>
<feature type="binding site" evidence="1">
    <location>
        <position position="485"/>
    </location>
    <ligand>
        <name>(E)-cinnamate</name>
        <dbReference type="ChEBI" id="CHEBI:15669"/>
    </ligand>
</feature>
<feature type="binding site" evidence="3">
    <location>
        <position position="488"/>
    </location>
    <ligand>
        <name>(E)-cinnamate</name>
        <dbReference type="ChEBI" id="CHEBI:15669"/>
    </ligand>
</feature>
<feature type="modified residue" description="2,3-didehydroalanine (Ser)" evidence="4">
    <location>
        <position position="204"/>
    </location>
</feature>
<feature type="cross-link" description="5-imidazolinone (Ala-Gly)" evidence="3">
    <location>
        <begin position="203"/>
        <end position="205"/>
    </location>
</feature>
<feature type="sequence conflict" description="In Ref. 5; AAM12956/AAN15354." evidence="6" ref="5">
    <original>E</original>
    <variation>A</variation>
    <location>
        <position position="50"/>
    </location>
</feature>
<feature type="sequence conflict" description="In Ref. 1; AAC18871." evidence="6" ref="1">
    <original>D</original>
    <variation>H</variation>
    <location>
        <position position="206"/>
    </location>
</feature>
<feature type="sequence conflict" description="In Ref. 1; AAC18871." evidence="6" ref="1">
    <original>A</original>
    <variation>E</variation>
    <location>
        <position position="235"/>
    </location>
</feature>
<name>PAL2_ARATH</name>
<gene>
    <name type="primary">PAL2</name>
    <name type="ordered locus">At3g53260</name>
    <name type="ORF">T4D2.190</name>
</gene>
<reference key="1">
    <citation type="journal article" date="1995" name="Plant Mol. Biol.">
        <title>The phenylalanine ammonia-lyase gene family in Arabidopsis thaliana.</title>
        <authorList>
            <person name="Wanner L.A."/>
            <person name="Li G."/>
            <person name="Ware D."/>
            <person name="Somssich I.E."/>
            <person name="Davis K.R."/>
        </authorList>
    </citation>
    <scope>NUCLEOTIDE SEQUENCE [GENOMIC DNA]</scope>
    <source>
        <strain>cv. Columbia</strain>
    </source>
</reference>
<reference key="2">
    <citation type="journal article" date="2004" name="Phytochemistry">
        <title>The Arabidopsis phenylalanine ammonia lyase gene family: kinetic characterization of the four PAL isoforms.</title>
        <authorList>
            <person name="Cochrane F.C."/>
            <person name="Davin L.B."/>
            <person name="Lewis N.G."/>
        </authorList>
    </citation>
    <scope>NUCLEOTIDE SEQUENCE [MRNA]</scope>
    <scope>FUNCTION</scope>
    <scope>CATALYTIC ACTIVITY</scope>
    <scope>BIOPHYSICOCHEMICAL PROPERTIES</scope>
    <source>
        <strain>cv. Columbia</strain>
    </source>
</reference>
<reference key="3">
    <citation type="journal article" date="2000" name="Nature">
        <title>Sequence and analysis of chromosome 3 of the plant Arabidopsis thaliana.</title>
        <authorList>
            <person name="Salanoubat M."/>
            <person name="Lemcke K."/>
            <person name="Rieger M."/>
            <person name="Ansorge W."/>
            <person name="Unseld M."/>
            <person name="Fartmann B."/>
            <person name="Valle G."/>
            <person name="Bloecker H."/>
            <person name="Perez-Alonso M."/>
            <person name="Obermaier B."/>
            <person name="Delseny M."/>
            <person name="Boutry M."/>
            <person name="Grivell L.A."/>
            <person name="Mache R."/>
            <person name="Puigdomenech P."/>
            <person name="De Simone V."/>
            <person name="Choisne N."/>
            <person name="Artiguenave F."/>
            <person name="Robert C."/>
            <person name="Brottier P."/>
            <person name="Wincker P."/>
            <person name="Cattolico L."/>
            <person name="Weissenbach J."/>
            <person name="Saurin W."/>
            <person name="Quetier F."/>
            <person name="Schaefer M."/>
            <person name="Mueller-Auer S."/>
            <person name="Gabel C."/>
            <person name="Fuchs M."/>
            <person name="Benes V."/>
            <person name="Wurmbach E."/>
            <person name="Drzonek H."/>
            <person name="Erfle H."/>
            <person name="Jordan N."/>
            <person name="Bangert S."/>
            <person name="Wiedelmann R."/>
            <person name="Kranz H."/>
            <person name="Voss H."/>
            <person name="Holland R."/>
            <person name="Brandt P."/>
            <person name="Nyakatura G."/>
            <person name="Vezzi A."/>
            <person name="D'Angelo M."/>
            <person name="Pallavicini A."/>
            <person name="Toppo S."/>
            <person name="Simionati B."/>
            <person name="Conrad A."/>
            <person name="Hornischer K."/>
            <person name="Kauer G."/>
            <person name="Loehnert T.-H."/>
            <person name="Nordsiek G."/>
            <person name="Reichelt J."/>
            <person name="Scharfe M."/>
            <person name="Schoen O."/>
            <person name="Bargues M."/>
            <person name="Terol J."/>
            <person name="Climent J."/>
            <person name="Navarro P."/>
            <person name="Collado C."/>
            <person name="Perez-Perez A."/>
            <person name="Ottenwaelder B."/>
            <person name="Duchemin D."/>
            <person name="Cooke R."/>
            <person name="Laudie M."/>
            <person name="Berger-Llauro C."/>
            <person name="Purnelle B."/>
            <person name="Masuy D."/>
            <person name="de Haan M."/>
            <person name="Maarse A.C."/>
            <person name="Alcaraz J.-P."/>
            <person name="Cottet A."/>
            <person name="Casacuberta E."/>
            <person name="Monfort A."/>
            <person name="Argiriou A."/>
            <person name="Flores M."/>
            <person name="Liguori R."/>
            <person name="Vitale D."/>
            <person name="Mannhaupt G."/>
            <person name="Haase D."/>
            <person name="Schoof H."/>
            <person name="Rudd S."/>
            <person name="Zaccaria P."/>
            <person name="Mewes H.-W."/>
            <person name="Mayer K.F.X."/>
            <person name="Kaul S."/>
            <person name="Town C.D."/>
            <person name="Koo H.L."/>
            <person name="Tallon L.J."/>
            <person name="Jenkins J."/>
            <person name="Rooney T."/>
            <person name="Rizzo M."/>
            <person name="Walts A."/>
            <person name="Utterback T."/>
            <person name="Fujii C.Y."/>
            <person name="Shea T.P."/>
            <person name="Creasy T.H."/>
            <person name="Haas B."/>
            <person name="Maiti R."/>
            <person name="Wu D."/>
            <person name="Peterson J."/>
            <person name="Van Aken S."/>
            <person name="Pai G."/>
            <person name="Militscher J."/>
            <person name="Sellers P."/>
            <person name="Gill J.E."/>
            <person name="Feldblyum T.V."/>
            <person name="Preuss D."/>
            <person name="Lin X."/>
            <person name="Nierman W.C."/>
            <person name="Salzberg S.L."/>
            <person name="White O."/>
            <person name="Venter J.C."/>
            <person name="Fraser C.M."/>
            <person name="Kaneko T."/>
            <person name="Nakamura Y."/>
            <person name="Sato S."/>
            <person name="Kato T."/>
            <person name="Asamizu E."/>
            <person name="Sasamoto S."/>
            <person name="Kimura T."/>
            <person name="Idesawa K."/>
            <person name="Kawashima K."/>
            <person name="Kishida Y."/>
            <person name="Kiyokawa C."/>
            <person name="Kohara M."/>
            <person name="Matsumoto M."/>
            <person name="Matsuno A."/>
            <person name="Muraki A."/>
            <person name="Nakayama S."/>
            <person name="Nakazaki N."/>
            <person name="Shinpo S."/>
            <person name="Takeuchi C."/>
            <person name="Wada T."/>
            <person name="Watanabe A."/>
            <person name="Yamada M."/>
            <person name="Yasuda M."/>
            <person name="Tabata S."/>
        </authorList>
    </citation>
    <scope>NUCLEOTIDE SEQUENCE [LARGE SCALE GENOMIC DNA]</scope>
    <source>
        <strain>cv. Columbia</strain>
    </source>
</reference>
<reference key="4">
    <citation type="journal article" date="2017" name="Plant J.">
        <title>Araport11: a complete reannotation of the Arabidopsis thaliana reference genome.</title>
        <authorList>
            <person name="Cheng C.Y."/>
            <person name="Krishnakumar V."/>
            <person name="Chan A.P."/>
            <person name="Thibaud-Nissen F."/>
            <person name="Schobel S."/>
            <person name="Town C.D."/>
        </authorList>
    </citation>
    <scope>GENOME REANNOTATION</scope>
    <source>
        <strain>cv. Columbia</strain>
    </source>
</reference>
<reference key="5">
    <citation type="journal article" date="2003" name="Science">
        <title>Empirical analysis of transcriptional activity in the Arabidopsis genome.</title>
        <authorList>
            <person name="Yamada K."/>
            <person name="Lim J."/>
            <person name="Dale J.M."/>
            <person name="Chen H."/>
            <person name="Shinn P."/>
            <person name="Palm C.J."/>
            <person name="Southwick A.M."/>
            <person name="Wu H.C."/>
            <person name="Kim C.J."/>
            <person name="Nguyen M."/>
            <person name="Pham P.K."/>
            <person name="Cheuk R.F."/>
            <person name="Karlin-Newmann G."/>
            <person name="Liu S.X."/>
            <person name="Lam B."/>
            <person name="Sakano H."/>
            <person name="Wu T."/>
            <person name="Yu G."/>
            <person name="Miranda M."/>
            <person name="Quach H.L."/>
            <person name="Tripp M."/>
            <person name="Chang C.H."/>
            <person name="Lee J.M."/>
            <person name="Toriumi M.J."/>
            <person name="Chan M.M."/>
            <person name="Tang C.C."/>
            <person name="Onodera C.S."/>
            <person name="Deng J.M."/>
            <person name="Akiyama K."/>
            <person name="Ansari Y."/>
            <person name="Arakawa T."/>
            <person name="Banh J."/>
            <person name="Banno F."/>
            <person name="Bowser L."/>
            <person name="Brooks S.Y."/>
            <person name="Carninci P."/>
            <person name="Chao Q."/>
            <person name="Choy N."/>
            <person name="Enju A."/>
            <person name="Goldsmith A.D."/>
            <person name="Gurjal M."/>
            <person name="Hansen N.F."/>
            <person name="Hayashizaki Y."/>
            <person name="Johnson-Hopson C."/>
            <person name="Hsuan V.W."/>
            <person name="Iida K."/>
            <person name="Karnes M."/>
            <person name="Khan S."/>
            <person name="Koesema E."/>
            <person name="Ishida J."/>
            <person name="Jiang P.X."/>
            <person name="Jones T."/>
            <person name="Kawai J."/>
            <person name="Kamiya A."/>
            <person name="Meyers C."/>
            <person name="Nakajima M."/>
            <person name="Narusaka M."/>
            <person name="Seki M."/>
            <person name="Sakurai T."/>
            <person name="Satou M."/>
            <person name="Tamse R."/>
            <person name="Vaysberg M."/>
            <person name="Wallender E.K."/>
            <person name="Wong C."/>
            <person name="Yamamura Y."/>
            <person name="Yuan S."/>
            <person name="Shinozaki K."/>
            <person name="Davis R.W."/>
            <person name="Theologis A."/>
            <person name="Ecker J.R."/>
        </authorList>
    </citation>
    <scope>NUCLEOTIDE SEQUENCE [LARGE SCALE MRNA]</scope>
    <source>
        <strain>cv. Columbia</strain>
    </source>
</reference>
<reference key="6">
    <citation type="journal article" date="2013" name="Plant Physiol. Biochem.">
        <title>The flavonoid biosynthetic pathway in Arabidopsis: Structural and genetic diversity.</title>
        <authorList>
            <person name="Saito K."/>
            <person name="Yonekura-Sakakibara K."/>
            <person name="Nakabayashi R."/>
            <person name="Higashi Y."/>
            <person name="Yamazaki M."/>
            <person name="Tohge T."/>
            <person name="Fernie A.R."/>
        </authorList>
    </citation>
    <scope>REVIEW</scope>
    <scope>NOMENCLATURE</scope>
</reference>
<keyword id="KW-0963">Cytoplasm</keyword>
<keyword id="KW-0456">Lyase</keyword>
<keyword id="KW-0585">Phenylalanine catabolism</keyword>
<keyword id="KW-0587">Phenylpropanoid metabolism</keyword>
<keyword id="KW-1185">Reference proteome</keyword>
<dbReference type="EC" id="4.3.1.24" evidence="5"/>
<dbReference type="EMBL" id="L33678">
    <property type="protein sequence ID" value="AAC18871.1"/>
    <property type="molecule type" value="Genomic_DNA"/>
</dbReference>
<dbReference type="EMBL" id="AY303129">
    <property type="protein sequence ID" value="AAP59439.1"/>
    <property type="molecule type" value="mRNA"/>
</dbReference>
<dbReference type="EMBL" id="AL132958">
    <property type="protein sequence ID" value="CAB64229.1"/>
    <property type="molecule type" value="Genomic_DNA"/>
</dbReference>
<dbReference type="EMBL" id="CP002686">
    <property type="protein sequence ID" value="AEE79055.1"/>
    <property type="molecule type" value="Genomic_DNA"/>
</dbReference>
<dbReference type="EMBL" id="AF367308">
    <property type="protein sequence ID" value="AAK32895.1"/>
    <property type="molecule type" value="mRNA"/>
</dbReference>
<dbReference type="EMBL" id="AY092957">
    <property type="protein sequence ID" value="AAM12956.1"/>
    <property type="molecule type" value="mRNA"/>
</dbReference>
<dbReference type="EMBL" id="AY133595">
    <property type="protein sequence ID" value="AAM91425.1"/>
    <property type="molecule type" value="mRNA"/>
</dbReference>
<dbReference type="EMBL" id="BT000035">
    <property type="protein sequence ID" value="AAN15354.1"/>
    <property type="molecule type" value="mRNA"/>
</dbReference>
<dbReference type="PIR" id="T46172">
    <property type="entry name" value="T46172"/>
</dbReference>
<dbReference type="RefSeq" id="NP_190894.1">
    <property type="nucleotide sequence ID" value="NM_115186.4"/>
</dbReference>
<dbReference type="SMR" id="P45724"/>
<dbReference type="BioGRID" id="9810">
    <property type="interactions" value="11"/>
</dbReference>
<dbReference type="FunCoup" id="P45724">
    <property type="interactions" value="270"/>
</dbReference>
<dbReference type="IntAct" id="P45724">
    <property type="interactions" value="5"/>
</dbReference>
<dbReference type="STRING" id="3702.P45724"/>
<dbReference type="PaxDb" id="3702-AT3G53260.1"/>
<dbReference type="ProteomicsDB" id="248654"/>
<dbReference type="EnsemblPlants" id="AT3G53260.1">
    <property type="protein sequence ID" value="AT3G53260.1"/>
    <property type="gene ID" value="AT3G53260"/>
</dbReference>
<dbReference type="GeneID" id="824493"/>
<dbReference type="Gramene" id="AT3G53260.1">
    <property type="protein sequence ID" value="AT3G53260.1"/>
    <property type="gene ID" value="AT3G53260"/>
</dbReference>
<dbReference type="KEGG" id="ath:AT3G53260"/>
<dbReference type="Araport" id="AT3G53260"/>
<dbReference type="TAIR" id="AT3G53260">
    <property type="gene designation" value="PAL2"/>
</dbReference>
<dbReference type="eggNOG" id="KOG0222">
    <property type="taxonomic scope" value="Eukaryota"/>
</dbReference>
<dbReference type="HOGENOM" id="CLU_014801_3_0_1"/>
<dbReference type="InParanoid" id="P45724"/>
<dbReference type="OMA" id="GNFHGDY"/>
<dbReference type="PhylomeDB" id="P45724"/>
<dbReference type="BRENDA" id="4.3.1.24">
    <property type="organism ID" value="399"/>
</dbReference>
<dbReference type="SABIO-RK" id="P45724"/>
<dbReference type="UniPathway" id="UPA00713">
    <property type="reaction ID" value="UER00725"/>
</dbReference>
<dbReference type="PRO" id="PR:P45724"/>
<dbReference type="Proteomes" id="UP000006548">
    <property type="component" value="Chromosome 3"/>
</dbReference>
<dbReference type="ExpressionAtlas" id="P45724">
    <property type="expression patterns" value="baseline and differential"/>
</dbReference>
<dbReference type="GO" id="GO:0005737">
    <property type="term" value="C:cytoplasm"/>
    <property type="evidence" value="ECO:0007669"/>
    <property type="project" value="UniProtKB-SubCell"/>
</dbReference>
<dbReference type="GO" id="GO:0045548">
    <property type="term" value="F:phenylalanine ammonia-lyase activity"/>
    <property type="evidence" value="ECO:0000304"/>
    <property type="project" value="TAIR"/>
</dbReference>
<dbReference type="GO" id="GO:0009800">
    <property type="term" value="P:cinnamic acid biosynthetic process"/>
    <property type="evidence" value="ECO:0007669"/>
    <property type="project" value="UniProtKB-UniPathway"/>
</dbReference>
<dbReference type="GO" id="GO:0006559">
    <property type="term" value="P:L-phenylalanine catabolic process"/>
    <property type="evidence" value="ECO:0000316"/>
    <property type="project" value="TAIR"/>
</dbReference>
<dbReference type="GO" id="GO:0009699">
    <property type="term" value="P:phenylpropanoid biosynthetic process"/>
    <property type="evidence" value="ECO:0000304"/>
    <property type="project" value="TAIR"/>
</dbReference>
<dbReference type="GO" id="GO:0006979">
    <property type="term" value="P:response to oxidative stress"/>
    <property type="evidence" value="ECO:0000270"/>
    <property type="project" value="TAIR"/>
</dbReference>
<dbReference type="CDD" id="cd00332">
    <property type="entry name" value="PAL-HAL"/>
    <property type="match status" value="1"/>
</dbReference>
<dbReference type="FunFam" id="1.10.274.20:FF:000001">
    <property type="entry name" value="Phenylalanine ammonia-lyase"/>
    <property type="match status" value="1"/>
</dbReference>
<dbReference type="FunFam" id="1.10.275.10:FF:000009">
    <property type="entry name" value="Phenylalanine ammonia-lyase"/>
    <property type="match status" value="1"/>
</dbReference>
<dbReference type="FunFam" id="1.20.200.10:FF:000009">
    <property type="entry name" value="Phenylalanine ammonia-lyase"/>
    <property type="match status" value="1"/>
</dbReference>
<dbReference type="Gene3D" id="1.20.200.10">
    <property type="entry name" value="Fumarase/aspartase (Central domain)"/>
    <property type="match status" value="1"/>
</dbReference>
<dbReference type="Gene3D" id="1.10.275.10">
    <property type="entry name" value="Fumarase/aspartase (N-terminal domain)"/>
    <property type="match status" value="1"/>
</dbReference>
<dbReference type="Gene3D" id="1.10.274.20">
    <property type="entry name" value="Phenylalanine ammonia-lyase 1, domain 3"/>
    <property type="match status" value="1"/>
</dbReference>
<dbReference type="InterPro" id="IPR001106">
    <property type="entry name" value="Aromatic_Lyase"/>
</dbReference>
<dbReference type="InterPro" id="IPR024083">
    <property type="entry name" value="Fumarase/histidase_N"/>
</dbReference>
<dbReference type="InterPro" id="IPR008948">
    <property type="entry name" value="L-Aspartase-like"/>
</dbReference>
<dbReference type="InterPro" id="IPR022313">
    <property type="entry name" value="Phe/His_NH3-lyase_AS"/>
</dbReference>
<dbReference type="InterPro" id="IPR005922">
    <property type="entry name" value="Phe_NH3-lyase"/>
</dbReference>
<dbReference type="InterPro" id="IPR023144">
    <property type="entry name" value="Phe_NH3-lyase_shielding_dom_sf"/>
</dbReference>
<dbReference type="NCBIfam" id="TIGR01226">
    <property type="entry name" value="phe_am_lyase"/>
    <property type="match status" value="1"/>
</dbReference>
<dbReference type="PANTHER" id="PTHR10362">
    <property type="entry name" value="HISTIDINE AMMONIA-LYASE"/>
    <property type="match status" value="1"/>
</dbReference>
<dbReference type="Pfam" id="PF00221">
    <property type="entry name" value="Lyase_aromatic"/>
    <property type="match status" value="1"/>
</dbReference>
<dbReference type="SUPFAM" id="SSF48557">
    <property type="entry name" value="L-aspartase-like"/>
    <property type="match status" value="1"/>
</dbReference>
<dbReference type="PROSITE" id="PS00488">
    <property type="entry name" value="PAL_HISTIDASE"/>
    <property type="match status" value="1"/>
</dbReference>
<comment type="function">
    <text evidence="5">This is a key enzyme of plant metabolism catalyzing the first reaction in the biosynthesis from L-phenylalanine of a wide variety of natural products based on the phenylpropane skeleton.</text>
</comment>
<comment type="catalytic activity">
    <reaction evidence="5">
        <text>L-phenylalanine = (E)-cinnamate + NH4(+)</text>
        <dbReference type="Rhea" id="RHEA:21384"/>
        <dbReference type="ChEBI" id="CHEBI:15669"/>
        <dbReference type="ChEBI" id="CHEBI:28938"/>
        <dbReference type="ChEBI" id="CHEBI:58095"/>
        <dbReference type="EC" id="4.3.1.24"/>
    </reaction>
</comment>
<comment type="biophysicochemical properties">
    <kinetics>
        <KM evidence="5">64 uM for L-phenylalanine</KM>
        <Vmax evidence="5">10.5 umol/sec/mg enzyme</Vmax>
    </kinetics>
    <phDependence>
        <text evidence="5">Optimum pH is 8.4-8.9.</text>
    </phDependence>
    <temperatureDependence>
        <text evidence="5">Optimum temperature is 48 degrees Celsius.</text>
    </temperatureDependence>
</comment>
<comment type="pathway">
    <text evidence="6">Phenylpropanoid metabolism; trans-cinnamate biosynthesis; trans-cinnamate from L-phenylalanine: step 1/1.</text>
</comment>
<comment type="subunit">
    <text evidence="2">Homotetramer.</text>
</comment>
<comment type="subcellular location">
    <subcellularLocation>
        <location evidence="6">Cytoplasm</location>
    </subcellularLocation>
</comment>
<comment type="PTM">
    <text evidence="3">Contains an active site 4-methylidene-imidazol-5-one (MIO), which is formed autocatalytically by cyclization and dehydration of residues Ala-Ser-Gly.</text>
</comment>
<comment type="similarity">
    <text evidence="6">Belongs to the PAL/histidase family.</text>
</comment>
<evidence type="ECO:0000250" key="1">
    <source>
        <dbReference type="UniProtKB" id="P11544"/>
    </source>
</evidence>
<evidence type="ECO:0000250" key="2">
    <source>
        <dbReference type="UniProtKB" id="P24481"/>
    </source>
</evidence>
<evidence type="ECO:0000250" key="3">
    <source>
        <dbReference type="UniProtKB" id="Q68G84"/>
    </source>
</evidence>
<evidence type="ECO:0000255" key="4">
    <source>
        <dbReference type="PROSITE-ProRule" id="PRU10122"/>
    </source>
</evidence>
<evidence type="ECO:0000269" key="5">
    <source>
    </source>
</evidence>
<evidence type="ECO:0000305" key="6"/>
<proteinExistence type="evidence at protein level"/>
<protein>
    <recommendedName>
        <fullName>Phenylalanine ammonia-lyase 2</fullName>
        <ecNumber evidence="5">4.3.1.24</ecNumber>
    </recommendedName>
</protein>
<organism>
    <name type="scientific">Arabidopsis thaliana</name>
    <name type="common">Mouse-ear cress</name>
    <dbReference type="NCBI Taxonomy" id="3702"/>
    <lineage>
        <taxon>Eukaryota</taxon>
        <taxon>Viridiplantae</taxon>
        <taxon>Streptophyta</taxon>
        <taxon>Embryophyta</taxon>
        <taxon>Tracheophyta</taxon>
        <taxon>Spermatophyta</taxon>
        <taxon>Magnoliopsida</taxon>
        <taxon>eudicotyledons</taxon>
        <taxon>Gunneridae</taxon>
        <taxon>Pentapetalae</taxon>
        <taxon>rosids</taxon>
        <taxon>malvids</taxon>
        <taxon>Brassicales</taxon>
        <taxon>Brassicaceae</taxon>
        <taxon>Camelineae</taxon>
        <taxon>Arabidopsis</taxon>
    </lineage>
</organism>
<sequence length="717" mass="77860">MDQIEAMLCGGGEKTKVAVTTKTLADPLNWGLAADQMKGSHLDEVKKMVEEYRRPVVNLGGETLTIGQVAAISTVGGSVKVELAETSRAGVKASSDWVMESMNKGTDSYGVTTGFGATSHRRTKNGTALQTELIRFLNAGIFGNTKETCHTLPQSATRAAMLVRVNTLLQGYSGIRFEILEAITSLLNHNISPSLPLRGTITASGDLVPLSYIAGLLTGRPNSKATGPDGESLTAKEAFEKAGISTGFFDLQPKEGLALVNGTAVGSGMASMVLFEANVQAVLAEVLSAIFAEVMSGKPEFTDHLTHRLKHHPGQIEAAAIMEHILDGSSYMKLAQKVHEMDPLQKPKQDRYALRTSPQWLGPQIEVIRQATKSIEREINSVNDNPLIDVSRNKAIHGGNFQGTPIGVSMDNTRLAIAAIGKLMFAQFSELVNDFYNNGLPSNLTASSNPSLDYGFKGAEIAMASYCSELQYLANPVTSHVQSAEQHNQDVNSLGLISSRKTSEAVDILKLMSTTFLVGICQAVDLRHLEENLRQTVKNTVSQVAKKVLTTGINGELHPSRFCEKDLLKVVDREQVFTYVDDPCSATYPLMQRLRQVIVDHALSNGETEKNAVTSIFQKIGAFEEELKAVLPKEVEAARAAYGNGTAPIPNRIKECRSYPLYRFVREELGTKLLTGEKVVSPGEEFDKVFTAMCEGKLIDPLMDCLKEWNGAPIPIC</sequence>